<reference key="1">
    <citation type="submission" date="2007-02" db="EMBL/GenBank/DDBJ databases">
        <title>Complete sequence of chromosome of Shewanella baltica OS155.</title>
        <authorList>
            <consortium name="US DOE Joint Genome Institute"/>
            <person name="Copeland A."/>
            <person name="Lucas S."/>
            <person name="Lapidus A."/>
            <person name="Barry K."/>
            <person name="Detter J.C."/>
            <person name="Glavina del Rio T."/>
            <person name="Hammon N."/>
            <person name="Israni S."/>
            <person name="Dalin E."/>
            <person name="Tice H."/>
            <person name="Pitluck S."/>
            <person name="Sims D.R."/>
            <person name="Brettin T."/>
            <person name="Bruce D."/>
            <person name="Han C."/>
            <person name="Tapia R."/>
            <person name="Brainard J."/>
            <person name="Schmutz J."/>
            <person name="Larimer F."/>
            <person name="Land M."/>
            <person name="Hauser L."/>
            <person name="Kyrpides N."/>
            <person name="Mikhailova N."/>
            <person name="Brettar I."/>
            <person name="Klappenbach J."/>
            <person name="Konstantinidis K."/>
            <person name="Rodrigues J."/>
            <person name="Tiedje J."/>
            <person name="Richardson P."/>
        </authorList>
    </citation>
    <scope>NUCLEOTIDE SEQUENCE [LARGE SCALE GENOMIC DNA]</scope>
    <source>
        <strain>OS155 / ATCC BAA-1091</strain>
    </source>
</reference>
<organism>
    <name type="scientific">Shewanella baltica (strain OS155 / ATCC BAA-1091)</name>
    <dbReference type="NCBI Taxonomy" id="325240"/>
    <lineage>
        <taxon>Bacteria</taxon>
        <taxon>Pseudomonadati</taxon>
        <taxon>Pseudomonadota</taxon>
        <taxon>Gammaproteobacteria</taxon>
        <taxon>Alteromonadales</taxon>
        <taxon>Shewanellaceae</taxon>
        <taxon>Shewanella</taxon>
    </lineage>
</organism>
<proteinExistence type="inferred from homology"/>
<keyword id="KW-0413">Isomerase</keyword>
<keyword id="KW-1185">Reference proteome</keyword>
<keyword id="KW-0819">tRNA processing</keyword>
<evidence type="ECO:0000255" key="1">
    <source>
        <dbReference type="HAMAP-Rule" id="MF_00171"/>
    </source>
</evidence>
<feature type="chain" id="PRO_1000017165" description="tRNA pseudouridine synthase A">
    <location>
        <begin position="1"/>
        <end position="261"/>
    </location>
</feature>
<feature type="active site" description="Nucleophile" evidence="1">
    <location>
        <position position="51"/>
    </location>
</feature>
<feature type="binding site" evidence="1">
    <location>
        <position position="109"/>
    </location>
    <ligand>
        <name>substrate</name>
    </ligand>
</feature>
<accession>A3D666</accession>
<protein>
    <recommendedName>
        <fullName evidence="1">tRNA pseudouridine synthase A</fullName>
        <ecNumber evidence="1">5.4.99.12</ecNumber>
    </recommendedName>
    <alternativeName>
        <fullName evidence="1">tRNA pseudouridine(38-40) synthase</fullName>
    </alternativeName>
    <alternativeName>
        <fullName evidence="1">tRNA pseudouridylate synthase I</fullName>
    </alternativeName>
    <alternativeName>
        <fullName evidence="1">tRNA-uridine isomerase I</fullName>
    </alternativeName>
</protein>
<gene>
    <name evidence="1" type="primary">truA</name>
    <name type="ordered locus">Sbal_2742</name>
</gene>
<sequence length="261" mass="29142">MRIALGIEYDGNGYFGWQRQAEVDSVQAQLERALSIVANEPIGVFCAGRTDAGVHATGQVVHFETQAIRNEGAWTLGVNANLPDNIAVRWVKEVDDSFHARFSATARRYRYVIYNHSFRPGILRHGVSHYHGDIDADRMHQAAQALLGEQDFTSFRAVQCQSKTPFRNVHCVNVTRQGMYVIVDIAANAFLHHMVRNIVGSLLEIGLGNQPLTWMGDLLALKDRNQAAATAKPHGLYLVDVTYPEQYQLPKLALGPLFMLD</sequence>
<comment type="function">
    <text evidence="1">Formation of pseudouridine at positions 38, 39 and 40 in the anticodon stem and loop of transfer RNAs.</text>
</comment>
<comment type="catalytic activity">
    <reaction evidence="1">
        <text>uridine(38/39/40) in tRNA = pseudouridine(38/39/40) in tRNA</text>
        <dbReference type="Rhea" id="RHEA:22376"/>
        <dbReference type="Rhea" id="RHEA-COMP:10085"/>
        <dbReference type="Rhea" id="RHEA-COMP:10087"/>
        <dbReference type="ChEBI" id="CHEBI:65314"/>
        <dbReference type="ChEBI" id="CHEBI:65315"/>
        <dbReference type="EC" id="5.4.99.12"/>
    </reaction>
</comment>
<comment type="subunit">
    <text evidence="1">Homodimer.</text>
</comment>
<comment type="similarity">
    <text evidence="1">Belongs to the tRNA pseudouridine synthase TruA family.</text>
</comment>
<dbReference type="EC" id="5.4.99.12" evidence="1"/>
<dbReference type="EMBL" id="CP000563">
    <property type="protein sequence ID" value="ABN62229.1"/>
    <property type="molecule type" value="Genomic_DNA"/>
</dbReference>
<dbReference type="RefSeq" id="WP_011847178.1">
    <property type="nucleotide sequence ID" value="NC_009052.1"/>
</dbReference>
<dbReference type="SMR" id="A3D666"/>
<dbReference type="STRING" id="325240.Sbal_2742"/>
<dbReference type="KEGG" id="sbl:Sbal_2742"/>
<dbReference type="HOGENOM" id="CLU_014673_0_2_6"/>
<dbReference type="OrthoDB" id="9811823at2"/>
<dbReference type="Proteomes" id="UP000001557">
    <property type="component" value="Chromosome"/>
</dbReference>
<dbReference type="GO" id="GO:0003723">
    <property type="term" value="F:RNA binding"/>
    <property type="evidence" value="ECO:0007669"/>
    <property type="project" value="InterPro"/>
</dbReference>
<dbReference type="GO" id="GO:0160147">
    <property type="term" value="F:tRNA pseudouridine(38-40) synthase activity"/>
    <property type="evidence" value="ECO:0007669"/>
    <property type="project" value="UniProtKB-EC"/>
</dbReference>
<dbReference type="GO" id="GO:0031119">
    <property type="term" value="P:tRNA pseudouridine synthesis"/>
    <property type="evidence" value="ECO:0007669"/>
    <property type="project" value="UniProtKB-UniRule"/>
</dbReference>
<dbReference type="CDD" id="cd02570">
    <property type="entry name" value="PseudoU_synth_EcTruA"/>
    <property type="match status" value="1"/>
</dbReference>
<dbReference type="FunFam" id="3.30.70.580:FF:000001">
    <property type="entry name" value="tRNA pseudouridine synthase A"/>
    <property type="match status" value="1"/>
</dbReference>
<dbReference type="FunFam" id="3.30.70.660:FF:000001">
    <property type="entry name" value="tRNA pseudouridine synthase A"/>
    <property type="match status" value="1"/>
</dbReference>
<dbReference type="Gene3D" id="3.30.70.660">
    <property type="entry name" value="Pseudouridine synthase I, catalytic domain, C-terminal subdomain"/>
    <property type="match status" value="1"/>
</dbReference>
<dbReference type="Gene3D" id="3.30.70.580">
    <property type="entry name" value="Pseudouridine synthase I, catalytic domain, N-terminal subdomain"/>
    <property type="match status" value="1"/>
</dbReference>
<dbReference type="HAMAP" id="MF_00171">
    <property type="entry name" value="TruA"/>
    <property type="match status" value="1"/>
</dbReference>
<dbReference type="InterPro" id="IPR020103">
    <property type="entry name" value="PsdUridine_synth_cat_dom_sf"/>
</dbReference>
<dbReference type="InterPro" id="IPR001406">
    <property type="entry name" value="PsdUridine_synth_TruA"/>
</dbReference>
<dbReference type="InterPro" id="IPR020097">
    <property type="entry name" value="PsdUridine_synth_TruA_a/b_dom"/>
</dbReference>
<dbReference type="InterPro" id="IPR020095">
    <property type="entry name" value="PsdUridine_synth_TruA_C"/>
</dbReference>
<dbReference type="InterPro" id="IPR020094">
    <property type="entry name" value="TruA/RsuA/RluB/E/F_N"/>
</dbReference>
<dbReference type="NCBIfam" id="TIGR00071">
    <property type="entry name" value="hisT_truA"/>
    <property type="match status" value="1"/>
</dbReference>
<dbReference type="PANTHER" id="PTHR11142">
    <property type="entry name" value="PSEUDOURIDYLATE SYNTHASE"/>
    <property type="match status" value="1"/>
</dbReference>
<dbReference type="PANTHER" id="PTHR11142:SF0">
    <property type="entry name" value="TRNA PSEUDOURIDINE SYNTHASE-LIKE 1"/>
    <property type="match status" value="1"/>
</dbReference>
<dbReference type="Pfam" id="PF01416">
    <property type="entry name" value="PseudoU_synth_1"/>
    <property type="match status" value="2"/>
</dbReference>
<dbReference type="PIRSF" id="PIRSF001430">
    <property type="entry name" value="tRNA_psdUrid_synth"/>
    <property type="match status" value="1"/>
</dbReference>
<dbReference type="SUPFAM" id="SSF55120">
    <property type="entry name" value="Pseudouridine synthase"/>
    <property type="match status" value="1"/>
</dbReference>
<name>TRUA_SHEB5</name>